<accession>Q92R94</accession>
<evidence type="ECO:0000255" key="1">
    <source>
        <dbReference type="HAMAP-Rule" id="MF_00676"/>
    </source>
</evidence>
<dbReference type="EMBL" id="AL591688">
    <property type="protein sequence ID" value="CAC45583.1"/>
    <property type="molecule type" value="Genomic_DNA"/>
</dbReference>
<dbReference type="RefSeq" id="NP_385117.1">
    <property type="nucleotide sequence ID" value="NC_003047.1"/>
</dbReference>
<dbReference type="RefSeq" id="WP_010968986.1">
    <property type="nucleotide sequence ID" value="NC_003047.1"/>
</dbReference>
<dbReference type="EnsemblBacteria" id="CAC45583">
    <property type="protein sequence ID" value="CAC45583"/>
    <property type="gene ID" value="SMc00064"/>
</dbReference>
<dbReference type="KEGG" id="sme:SMc00064"/>
<dbReference type="PATRIC" id="fig|266834.11.peg.2414"/>
<dbReference type="eggNOG" id="COG2983">
    <property type="taxonomic scope" value="Bacteria"/>
</dbReference>
<dbReference type="HOGENOM" id="CLU_109769_0_1_5"/>
<dbReference type="OrthoDB" id="9786855at2"/>
<dbReference type="Proteomes" id="UP000001976">
    <property type="component" value="Chromosome"/>
</dbReference>
<dbReference type="HAMAP" id="MF_00676">
    <property type="entry name" value="UPF0260"/>
    <property type="match status" value="1"/>
</dbReference>
<dbReference type="InterPro" id="IPR005358">
    <property type="entry name" value="Puta_zinc/iron-chelating_dom"/>
</dbReference>
<dbReference type="InterPro" id="IPR008228">
    <property type="entry name" value="UCP006173"/>
</dbReference>
<dbReference type="NCBIfam" id="NF003501">
    <property type="entry name" value="PRK05170.1-5"/>
    <property type="match status" value="1"/>
</dbReference>
<dbReference type="NCBIfam" id="NF003507">
    <property type="entry name" value="PRK05170.2-5"/>
    <property type="match status" value="1"/>
</dbReference>
<dbReference type="PANTHER" id="PTHR37421">
    <property type="entry name" value="UPF0260 PROTEIN YCGN"/>
    <property type="match status" value="1"/>
</dbReference>
<dbReference type="PANTHER" id="PTHR37421:SF1">
    <property type="entry name" value="UPF0260 PROTEIN YCGN"/>
    <property type="match status" value="1"/>
</dbReference>
<dbReference type="Pfam" id="PF03692">
    <property type="entry name" value="CxxCxxCC"/>
    <property type="match status" value="1"/>
</dbReference>
<dbReference type="PIRSF" id="PIRSF006173">
    <property type="entry name" value="UCP006173"/>
    <property type="match status" value="1"/>
</dbReference>
<reference key="1">
    <citation type="journal article" date="2001" name="Proc. Natl. Acad. Sci. U.S.A.">
        <title>Analysis of the chromosome sequence of the legume symbiont Sinorhizobium meliloti strain 1021.</title>
        <authorList>
            <person name="Capela D."/>
            <person name="Barloy-Hubler F."/>
            <person name="Gouzy J."/>
            <person name="Bothe G."/>
            <person name="Ampe F."/>
            <person name="Batut J."/>
            <person name="Boistard P."/>
            <person name="Becker A."/>
            <person name="Boutry M."/>
            <person name="Cadieu E."/>
            <person name="Dreano S."/>
            <person name="Gloux S."/>
            <person name="Godrie T."/>
            <person name="Goffeau A."/>
            <person name="Kahn D."/>
            <person name="Kiss E."/>
            <person name="Lelaure V."/>
            <person name="Masuy D."/>
            <person name="Pohl T."/>
            <person name="Portetelle D."/>
            <person name="Puehler A."/>
            <person name="Purnelle B."/>
            <person name="Ramsperger U."/>
            <person name="Renard C."/>
            <person name="Thebault P."/>
            <person name="Vandenbol M."/>
            <person name="Weidner S."/>
            <person name="Galibert F."/>
        </authorList>
    </citation>
    <scope>NUCLEOTIDE SEQUENCE [LARGE SCALE GENOMIC DNA]</scope>
    <source>
        <strain>1021</strain>
    </source>
</reference>
<reference key="2">
    <citation type="journal article" date="2001" name="Science">
        <title>The composite genome of the legume symbiont Sinorhizobium meliloti.</title>
        <authorList>
            <person name="Galibert F."/>
            <person name="Finan T.M."/>
            <person name="Long S.R."/>
            <person name="Puehler A."/>
            <person name="Abola P."/>
            <person name="Ampe F."/>
            <person name="Barloy-Hubler F."/>
            <person name="Barnett M.J."/>
            <person name="Becker A."/>
            <person name="Boistard P."/>
            <person name="Bothe G."/>
            <person name="Boutry M."/>
            <person name="Bowser L."/>
            <person name="Buhrmester J."/>
            <person name="Cadieu E."/>
            <person name="Capela D."/>
            <person name="Chain P."/>
            <person name="Cowie A."/>
            <person name="Davis R.W."/>
            <person name="Dreano S."/>
            <person name="Federspiel N.A."/>
            <person name="Fisher R.F."/>
            <person name="Gloux S."/>
            <person name="Godrie T."/>
            <person name="Goffeau A."/>
            <person name="Golding B."/>
            <person name="Gouzy J."/>
            <person name="Gurjal M."/>
            <person name="Hernandez-Lucas I."/>
            <person name="Hong A."/>
            <person name="Huizar L."/>
            <person name="Hyman R.W."/>
            <person name="Jones T."/>
            <person name="Kahn D."/>
            <person name="Kahn M.L."/>
            <person name="Kalman S."/>
            <person name="Keating D.H."/>
            <person name="Kiss E."/>
            <person name="Komp C."/>
            <person name="Lelaure V."/>
            <person name="Masuy D."/>
            <person name="Palm C."/>
            <person name="Peck M.C."/>
            <person name="Pohl T.M."/>
            <person name="Portetelle D."/>
            <person name="Purnelle B."/>
            <person name="Ramsperger U."/>
            <person name="Surzycki R."/>
            <person name="Thebault P."/>
            <person name="Vandenbol M."/>
            <person name="Vorhoelter F.J."/>
            <person name="Weidner S."/>
            <person name="Wells D.H."/>
            <person name="Wong K."/>
            <person name="Yeh K.-C."/>
            <person name="Batut J."/>
        </authorList>
    </citation>
    <scope>NUCLEOTIDE SEQUENCE [LARGE SCALE GENOMIC DNA]</scope>
    <source>
        <strain>1021</strain>
    </source>
</reference>
<name>Y1011_RHIME</name>
<keyword id="KW-1185">Reference proteome</keyword>
<comment type="similarity">
    <text evidence="1">Belongs to the UPF0260 family.</text>
</comment>
<organism>
    <name type="scientific">Rhizobium meliloti (strain 1021)</name>
    <name type="common">Ensifer meliloti</name>
    <name type="synonym">Sinorhizobium meliloti</name>
    <dbReference type="NCBI Taxonomy" id="266834"/>
    <lineage>
        <taxon>Bacteria</taxon>
        <taxon>Pseudomonadati</taxon>
        <taxon>Pseudomonadota</taxon>
        <taxon>Alphaproteobacteria</taxon>
        <taxon>Hyphomicrobiales</taxon>
        <taxon>Rhizobiaceae</taxon>
        <taxon>Sinorhizobium/Ensifer group</taxon>
        <taxon>Sinorhizobium</taxon>
    </lineage>
</organism>
<proteinExistence type="inferred from homology"/>
<gene>
    <name type="ordered locus">R01011</name>
    <name type="ORF">SMc00064</name>
</gene>
<sequence length="155" mass="17477">MGETPFWKTKGLEEMTGAEWESLCDGCGLCCLNKLEDWDSSEIAWTSIRCTLLDGESCRCKDYDNRQATVPDCIQLTPKAVREISWLPPTCGYRLVAEGRDLYWWHPLVSGDPETVHAAGISVRGRTVAEDGIDIEDYEDYLVTWPLEVGREPAD</sequence>
<protein>
    <recommendedName>
        <fullName evidence="1">UPF0260 protein R01011</fullName>
    </recommendedName>
</protein>
<feature type="chain" id="PRO_0000214589" description="UPF0260 protein R01011">
    <location>
        <begin position="1"/>
        <end position="155"/>
    </location>
</feature>